<dbReference type="EC" id="4.1.1.4" evidence="1"/>
<dbReference type="EMBL" id="CP000441">
    <property type="protein sequence ID" value="ABI90532.1"/>
    <property type="molecule type" value="Genomic_DNA"/>
</dbReference>
<dbReference type="RefSeq" id="WP_011659919.1">
    <property type="nucleotide sequence ID" value="NZ_CP009799.1"/>
</dbReference>
<dbReference type="SMR" id="Q0B5P1"/>
<dbReference type="KEGG" id="bam:Bamb_4983"/>
<dbReference type="PATRIC" id="fig|339670.21.peg.5355"/>
<dbReference type="eggNOG" id="COG4689">
    <property type="taxonomic scope" value="Bacteria"/>
</dbReference>
<dbReference type="Proteomes" id="UP000000662">
    <property type="component" value="Chromosome 2"/>
</dbReference>
<dbReference type="GO" id="GO:0047602">
    <property type="term" value="F:acetoacetate decarboxylase activity"/>
    <property type="evidence" value="ECO:0007669"/>
    <property type="project" value="UniProtKB-UniRule"/>
</dbReference>
<dbReference type="Gene3D" id="2.40.400.10">
    <property type="entry name" value="Acetoacetate decarboxylase-like"/>
    <property type="match status" value="1"/>
</dbReference>
<dbReference type="HAMAP" id="MF_00597">
    <property type="entry name" value="ADC"/>
    <property type="match status" value="1"/>
</dbReference>
<dbReference type="InterPro" id="IPR010451">
    <property type="entry name" value="Acetoacetate_decarboxylase"/>
</dbReference>
<dbReference type="InterPro" id="IPR023653">
    <property type="entry name" value="Acetoacetate_decarboxylase_bac"/>
</dbReference>
<dbReference type="InterPro" id="IPR023375">
    <property type="entry name" value="ADC_dom_sf"/>
</dbReference>
<dbReference type="NCBIfam" id="NF002614">
    <property type="entry name" value="PRK02265.1"/>
    <property type="match status" value="1"/>
</dbReference>
<dbReference type="Pfam" id="PF06314">
    <property type="entry name" value="ADC"/>
    <property type="match status" value="1"/>
</dbReference>
<dbReference type="SUPFAM" id="SSF160104">
    <property type="entry name" value="Acetoacetate decarboxylase-like"/>
    <property type="match status" value="1"/>
</dbReference>
<gene>
    <name evidence="1" type="primary">adc</name>
    <name type="ordered locus">Bamb_4983</name>
</gene>
<sequence length="246" mass="27413">MKISDVRSKAFAMPLTSPAFPMGPYRFVDREFLIITYRTDPDRLREIVPEPLQITEPLVHYEFIRMADSTGFGDYTESGQVIPVEYNGQAGGYTLAMYLDDHPPIAGGRELWGFPKKLASPTLHVNTDHILGTLDYGKVRVATGTMGYKHKDLDIEEQAKRLAGPNFLLKIIPHVDGTARVCELVRYYMQDIKMKGAWTGPASLELAPHALAPVADLPVLEIVEARHIVADLTLGLGEVVYDYLAQ</sequence>
<accession>Q0B5P1</accession>
<comment type="function">
    <text evidence="1">Catalyzes the conversion of acetoacetate to acetone and carbon dioxide.</text>
</comment>
<comment type="catalytic activity">
    <reaction evidence="1">
        <text>acetoacetate + H(+) = acetone + CO2</text>
        <dbReference type="Rhea" id="RHEA:19729"/>
        <dbReference type="ChEBI" id="CHEBI:13705"/>
        <dbReference type="ChEBI" id="CHEBI:15347"/>
        <dbReference type="ChEBI" id="CHEBI:15378"/>
        <dbReference type="ChEBI" id="CHEBI:16526"/>
        <dbReference type="EC" id="4.1.1.4"/>
    </reaction>
</comment>
<comment type="similarity">
    <text evidence="1">Belongs to the ADC family.</text>
</comment>
<name>ADC_BURCM</name>
<keyword id="KW-0210">Decarboxylase</keyword>
<keyword id="KW-0456">Lyase</keyword>
<keyword id="KW-0704">Schiff base</keyword>
<proteinExistence type="inferred from homology"/>
<feature type="chain" id="PRO_1000025633" description="Acetoacetate decarboxylase">
    <location>
        <begin position="1"/>
        <end position="246"/>
    </location>
</feature>
<feature type="active site" description="Schiff-base intermediate with acetoacetate" evidence="1">
    <location>
        <position position="116"/>
    </location>
</feature>
<organism>
    <name type="scientific">Burkholderia ambifaria (strain ATCC BAA-244 / DSM 16087 / CCUG 44356 / LMG 19182 / AMMD)</name>
    <name type="common">Burkholderia cepacia (strain AMMD)</name>
    <dbReference type="NCBI Taxonomy" id="339670"/>
    <lineage>
        <taxon>Bacteria</taxon>
        <taxon>Pseudomonadati</taxon>
        <taxon>Pseudomonadota</taxon>
        <taxon>Betaproteobacteria</taxon>
        <taxon>Burkholderiales</taxon>
        <taxon>Burkholderiaceae</taxon>
        <taxon>Burkholderia</taxon>
        <taxon>Burkholderia cepacia complex</taxon>
    </lineage>
</organism>
<protein>
    <recommendedName>
        <fullName evidence="1">Acetoacetate decarboxylase</fullName>
        <shortName evidence="1">AAD</shortName>
        <shortName evidence="1">ADC</shortName>
        <ecNumber evidence="1">4.1.1.4</ecNumber>
    </recommendedName>
</protein>
<evidence type="ECO:0000255" key="1">
    <source>
        <dbReference type="HAMAP-Rule" id="MF_00597"/>
    </source>
</evidence>
<reference key="1">
    <citation type="submission" date="2006-08" db="EMBL/GenBank/DDBJ databases">
        <title>Complete sequence of chromosome 2 of Burkholderia cepacia AMMD.</title>
        <authorList>
            <person name="Copeland A."/>
            <person name="Lucas S."/>
            <person name="Lapidus A."/>
            <person name="Barry K."/>
            <person name="Detter J.C."/>
            <person name="Glavina del Rio T."/>
            <person name="Hammon N."/>
            <person name="Israni S."/>
            <person name="Pitluck S."/>
            <person name="Bruce D."/>
            <person name="Chain P."/>
            <person name="Malfatti S."/>
            <person name="Shin M."/>
            <person name="Vergez L."/>
            <person name="Schmutz J."/>
            <person name="Larimer F."/>
            <person name="Land M."/>
            <person name="Hauser L."/>
            <person name="Kyrpides N."/>
            <person name="Kim E."/>
            <person name="Parke J."/>
            <person name="Coenye T."/>
            <person name="Konstantinidis K."/>
            <person name="Ramette A."/>
            <person name="Tiedje J."/>
            <person name="Richardson P."/>
        </authorList>
    </citation>
    <scope>NUCLEOTIDE SEQUENCE [LARGE SCALE GENOMIC DNA]</scope>
    <source>
        <strain>ATCC BAA-244 / DSM 16087 / CCUG 44356 / LMG 19182 / AMMD</strain>
    </source>
</reference>